<protein>
    <recommendedName>
        <fullName evidence="1">UPF0149 protein Pput_5108</fullName>
    </recommendedName>
</protein>
<organism>
    <name type="scientific">Pseudomonas putida (strain ATCC 700007 / DSM 6899 / JCM 31910 / BCRC 17059 / LMG 24140 / F1)</name>
    <dbReference type="NCBI Taxonomy" id="351746"/>
    <lineage>
        <taxon>Bacteria</taxon>
        <taxon>Pseudomonadati</taxon>
        <taxon>Pseudomonadota</taxon>
        <taxon>Gammaproteobacteria</taxon>
        <taxon>Pseudomonadales</taxon>
        <taxon>Pseudomonadaceae</taxon>
        <taxon>Pseudomonas</taxon>
    </lineage>
</organism>
<evidence type="ECO:0000255" key="1">
    <source>
        <dbReference type="HAMAP-Rule" id="MF_00346"/>
    </source>
</evidence>
<sequence length="184" mass="19468">MPNTQSPYNAFAMLLSSNGHPVTPAELHGLLIGRSCAGAGFDADAWLADAAQLLEIEPGDSVRNALVGLQEMVKGELTSDDMAIVLLLPTDDAALSDRATALGQWCQGFVTGFGLNAGGKDLSDEAKEVLQDLVAISQVQEALEESEDGESDYMEVMEYLRVAPLLLFSELAKPAAPAPKPSLH</sequence>
<reference key="1">
    <citation type="submission" date="2007-05" db="EMBL/GenBank/DDBJ databases">
        <title>Complete sequence of Pseudomonas putida F1.</title>
        <authorList>
            <consortium name="US DOE Joint Genome Institute"/>
            <person name="Copeland A."/>
            <person name="Lucas S."/>
            <person name="Lapidus A."/>
            <person name="Barry K."/>
            <person name="Detter J.C."/>
            <person name="Glavina del Rio T."/>
            <person name="Hammon N."/>
            <person name="Israni S."/>
            <person name="Dalin E."/>
            <person name="Tice H."/>
            <person name="Pitluck S."/>
            <person name="Chain P."/>
            <person name="Malfatti S."/>
            <person name="Shin M."/>
            <person name="Vergez L."/>
            <person name="Schmutz J."/>
            <person name="Larimer F."/>
            <person name="Land M."/>
            <person name="Hauser L."/>
            <person name="Kyrpides N."/>
            <person name="Lykidis A."/>
            <person name="Parales R."/>
            <person name="Richardson P."/>
        </authorList>
    </citation>
    <scope>NUCLEOTIDE SEQUENCE [LARGE SCALE GENOMIC DNA]</scope>
    <source>
        <strain>ATCC 700007 / DSM 6899 / JCM 31910 / BCRC 17059 / LMG 24140 / F1</strain>
    </source>
</reference>
<proteinExistence type="inferred from homology"/>
<name>Y5108_PSEP1</name>
<dbReference type="EMBL" id="CP000712">
    <property type="protein sequence ID" value="ABQ81226.1"/>
    <property type="molecule type" value="Genomic_DNA"/>
</dbReference>
<dbReference type="SMR" id="A5WAR6"/>
<dbReference type="KEGG" id="ppf:Pput_5108"/>
<dbReference type="eggNOG" id="COG3079">
    <property type="taxonomic scope" value="Bacteria"/>
</dbReference>
<dbReference type="HOGENOM" id="CLU_085336_0_1_6"/>
<dbReference type="GO" id="GO:0005829">
    <property type="term" value="C:cytosol"/>
    <property type="evidence" value="ECO:0007669"/>
    <property type="project" value="TreeGrafter"/>
</dbReference>
<dbReference type="Gene3D" id="1.20.120.740">
    <property type="entry name" value="YgfB uncharacterised protein family UPF0149, PF03695"/>
    <property type="match status" value="1"/>
</dbReference>
<dbReference type="HAMAP" id="MF_00346">
    <property type="entry name" value="UPF0149"/>
    <property type="match status" value="1"/>
</dbReference>
<dbReference type="InterPro" id="IPR011978">
    <property type="entry name" value="YgfB-like"/>
</dbReference>
<dbReference type="InterPro" id="IPR036255">
    <property type="entry name" value="YgfB-like_sf"/>
</dbReference>
<dbReference type="NCBIfam" id="NF002562">
    <property type="entry name" value="PRK02166.1"/>
    <property type="match status" value="1"/>
</dbReference>
<dbReference type="PANTHER" id="PTHR37528">
    <property type="entry name" value="UPF0149 PROTEIN YGFB"/>
    <property type="match status" value="1"/>
</dbReference>
<dbReference type="PANTHER" id="PTHR37528:SF1">
    <property type="entry name" value="UPF0149 PROTEIN YGFB"/>
    <property type="match status" value="1"/>
</dbReference>
<dbReference type="Pfam" id="PF03695">
    <property type="entry name" value="UPF0149"/>
    <property type="match status" value="1"/>
</dbReference>
<dbReference type="SUPFAM" id="SSF101327">
    <property type="entry name" value="YgfB-like"/>
    <property type="match status" value="1"/>
</dbReference>
<feature type="chain" id="PRO_1000059831" description="UPF0149 protein Pput_5108">
    <location>
        <begin position="1"/>
        <end position="184"/>
    </location>
</feature>
<gene>
    <name type="ordered locus">Pput_5108</name>
</gene>
<accession>A5WAR6</accession>
<comment type="similarity">
    <text evidence="1">Belongs to the UPF0149 family.</text>
</comment>